<sequence length="301" mass="33831">MIYLHAIDPIAFSLGPVKVHWYGLMYLASFGAAWCLGRQRIQAGRLLGVNMDGFSDLLFYAMMGVVLGGRVGYMLFYAFHDFLQEPLLLFRVWEGGMSFHGGLIGVLLAVAWWSRRHRLQMFDVLDFGAPLVPVGLGFGRLGNFIGGELWGKLTHNGWGVIFPRAPLSDVPAGQLAMQDVMNFVQIQEHYAAGLLGHYARHPSQLYEAFLEGLVMFIVLWLFSRKPRPRYAVSGLFALLYGVFRFLVEFVRMPDNGVYVAFGWLTRGQILSLPLIVIGLFLFWLSCRSPVLQPVPAPEVAK</sequence>
<comment type="function">
    <text evidence="1">Catalyzes the transfer of the diacylglyceryl group from phosphatidylglycerol to the sulfhydryl group of the N-terminal cysteine of a prolipoprotein, the first step in the formation of mature lipoproteins.</text>
</comment>
<comment type="catalytic activity">
    <reaction evidence="1">
        <text>L-cysteinyl-[prolipoprotein] + a 1,2-diacyl-sn-glycero-3-phospho-(1'-sn-glycerol) = an S-1,2-diacyl-sn-glyceryl-L-cysteinyl-[prolipoprotein] + sn-glycerol 1-phosphate + H(+)</text>
        <dbReference type="Rhea" id="RHEA:56712"/>
        <dbReference type="Rhea" id="RHEA-COMP:14679"/>
        <dbReference type="Rhea" id="RHEA-COMP:14680"/>
        <dbReference type="ChEBI" id="CHEBI:15378"/>
        <dbReference type="ChEBI" id="CHEBI:29950"/>
        <dbReference type="ChEBI" id="CHEBI:57685"/>
        <dbReference type="ChEBI" id="CHEBI:64716"/>
        <dbReference type="ChEBI" id="CHEBI:140658"/>
        <dbReference type="EC" id="2.5.1.145"/>
    </reaction>
</comment>
<comment type="pathway">
    <text evidence="1">Protein modification; lipoprotein biosynthesis (diacylglyceryl transfer).</text>
</comment>
<comment type="subcellular location">
    <subcellularLocation>
        <location evidence="1">Cell inner membrane</location>
        <topology evidence="1">Multi-pass membrane protein</topology>
    </subcellularLocation>
</comment>
<comment type="similarity">
    <text evidence="1">Belongs to the Lgt family.</text>
</comment>
<accession>Q9PB12</accession>
<keyword id="KW-0997">Cell inner membrane</keyword>
<keyword id="KW-1003">Cell membrane</keyword>
<keyword id="KW-0472">Membrane</keyword>
<keyword id="KW-0808">Transferase</keyword>
<keyword id="KW-0812">Transmembrane</keyword>
<keyword id="KW-1133">Transmembrane helix</keyword>
<feature type="chain" id="PRO_0000172720" description="Phosphatidylglycerol--prolipoprotein diacylglyceryl transferase">
    <location>
        <begin position="1"/>
        <end position="301"/>
    </location>
</feature>
<feature type="transmembrane region" description="Helical" evidence="1">
    <location>
        <begin position="10"/>
        <end position="30"/>
    </location>
</feature>
<feature type="transmembrane region" description="Helical" evidence="1">
    <location>
        <begin position="57"/>
        <end position="77"/>
    </location>
</feature>
<feature type="transmembrane region" description="Helical" evidence="1">
    <location>
        <begin position="92"/>
        <end position="112"/>
    </location>
</feature>
<feature type="transmembrane region" description="Helical" evidence="1">
    <location>
        <begin position="119"/>
        <end position="139"/>
    </location>
</feature>
<feature type="transmembrane region" description="Helical" evidence="1">
    <location>
        <begin position="202"/>
        <end position="222"/>
    </location>
</feature>
<feature type="transmembrane region" description="Helical" evidence="1">
    <location>
        <begin position="230"/>
        <end position="250"/>
    </location>
</feature>
<feature type="transmembrane region" description="Helical" evidence="1">
    <location>
        <begin position="264"/>
        <end position="284"/>
    </location>
</feature>
<feature type="binding site" evidence="1">
    <location>
        <position position="140"/>
    </location>
    <ligand>
        <name>a 1,2-diacyl-sn-glycero-3-phospho-(1'-sn-glycerol)</name>
        <dbReference type="ChEBI" id="CHEBI:64716"/>
    </ligand>
</feature>
<gene>
    <name evidence="1" type="primary">lgt</name>
    <name type="ordered locus">XF_2333</name>
</gene>
<dbReference type="EC" id="2.5.1.145" evidence="1"/>
<dbReference type="EMBL" id="AE003849">
    <property type="protein sequence ID" value="AAF85132.1"/>
    <property type="molecule type" value="Genomic_DNA"/>
</dbReference>
<dbReference type="PIR" id="H82569">
    <property type="entry name" value="H82569"/>
</dbReference>
<dbReference type="RefSeq" id="WP_010894779.1">
    <property type="nucleotide sequence ID" value="NC_002488.3"/>
</dbReference>
<dbReference type="SMR" id="Q9PB12"/>
<dbReference type="STRING" id="160492.XF_2333"/>
<dbReference type="KEGG" id="xfa:XF_2333"/>
<dbReference type="eggNOG" id="COG0682">
    <property type="taxonomic scope" value="Bacteria"/>
</dbReference>
<dbReference type="HOGENOM" id="CLU_013386_1_0_6"/>
<dbReference type="UniPathway" id="UPA00664"/>
<dbReference type="Proteomes" id="UP000000812">
    <property type="component" value="Chromosome"/>
</dbReference>
<dbReference type="GO" id="GO:0005886">
    <property type="term" value="C:plasma membrane"/>
    <property type="evidence" value="ECO:0007669"/>
    <property type="project" value="UniProtKB-SubCell"/>
</dbReference>
<dbReference type="GO" id="GO:0008961">
    <property type="term" value="F:phosphatidylglycerol-prolipoprotein diacylglyceryl transferase activity"/>
    <property type="evidence" value="ECO:0007669"/>
    <property type="project" value="UniProtKB-UniRule"/>
</dbReference>
<dbReference type="GO" id="GO:0042158">
    <property type="term" value="P:lipoprotein biosynthetic process"/>
    <property type="evidence" value="ECO:0007669"/>
    <property type="project" value="UniProtKB-UniRule"/>
</dbReference>
<dbReference type="HAMAP" id="MF_01147">
    <property type="entry name" value="Lgt"/>
    <property type="match status" value="1"/>
</dbReference>
<dbReference type="InterPro" id="IPR001640">
    <property type="entry name" value="Lgt"/>
</dbReference>
<dbReference type="NCBIfam" id="TIGR00544">
    <property type="entry name" value="lgt"/>
    <property type="match status" value="1"/>
</dbReference>
<dbReference type="PANTHER" id="PTHR30589:SF0">
    <property type="entry name" value="PHOSPHATIDYLGLYCEROL--PROLIPOPROTEIN DIACYLGLYCERYL TRANSFERASE"/>
    <property type="match status" value="1"/>
</dbReference>
<dbReference type="PANTHER" id="PTHR30589">
    <property type="entry name" value="PROLIPOPROTEIN DIACYLGLYCERYL TRANSFERASE"/>
    <property type="match status" value="1"/>
</dbReference>
<dbReference type="Pfam" id="PF01790">
    <property type="entry name" value="LGT"/>
    <property type="match status" value="1"/>
</dbReference>
<dbReference type="PROSITE" id="PS01311">
    <property type="entry name" value="LGT"/>
    <property type="match status" value="1"/>
</dbReference>
<evidence type="ECO:0000255" key="1">
    <source>
        <dbReference type="HAMAP-Rule" id="MF_01147"/>
    </source>
</evidence>
<name>LGT_XYLFA</name>
<organism>
    <name type="scientific">Xylella fastidiosa (strain 9a5c)</name>
    <dbReference type="NCBI Taxonomy" id="160492"/>
    <lineage>
        <taxon>Bacteria</taxon>
        <taxon>Pseudomonadati</taxon>
        <taxon>Pseudomonadota</taxon>
        <taxon>Gammaproteobacteria</taxon>
        <taxon>Lysobacterales</taxon>
        <taxon>Lysobacteraceae</taxon>
        <taxon>Xylella</taxon>
    </lineage>
</organism>
<reference key="1">
    <citation type="journal article" date="2000" name="Nature">
        <title>The genome sequence of the plant pathogen Xylella fastidiosa.</title>
        <authorList>
            <person name="Simpson A.J.G."/>
            <person name="Reinach F.C."/>
            <person name="Arruda P."/>
            <person name="Abreu F.A."/>
            <person name="Acencio M."/>
            <person name="Alvarenga R."/>
            <person name="Alves L.M.C."/>
            <person name="Araya J.E."/>
            <person name="Baia G.S."/>
            <person name="Baptista C.S."/>
            <person name="Barros M.H."/>
            <person name="Bonaccorsi E.D."/>
            <person name="Bordin S."/>
            <person name="Bove J.M."/>
            <person name="Briones M.R.S."/>
            <person name="Bueno M.R.P."/>
            <person name="Camargo A.A."/>
            <person name="Camargo L.E.A."/>
            <person name="Carraro D.M."/>
            <person name="Carrer H."/>
            <person name="Colauto N.B."/>
            <person name="Colombo C."/>
            <person name="Costa F.F."/>
            <person name="Costa M.C.R."/>
            <person name="Costa-Neto C.M."/>
            <person name="Coutinho L.L."/>
            <person name="Cristofani M."/>
            <person name="Dias-Neto E."/>
            <person name="Docena C."/>
            <person name="El-Dorry H."/>
            <person name="Facincani A.P."/>
            <person name="Ferreira A.J.S."/>
            <person name="Ferreira V.C.A."/>
            <person name="Ferro J.A."/>
            <person name="Fraga J.S."/>
            <person name="Franca S.C."/>
            <person name="Franco M.C."/>
            <person name="Frohme M."/>
            <person name="Furlan L.R."/>
            <person name="Garnier M."/>
            <person name="Goldman G.H."/>
            <person name="Goldman M.H.S."/>
            <person name="Gomes S.L."/>
            <person name="Gruber A."/>
            <person name="Ho P.L."/>
            <person name="Hoheisel J.D."/>
            <person name="Junqueira M.L."/>
            <person name="Kemper E.L."/>
            <person name="Kitajima J.P."/>
            <person name="Krieger J.E."/>
            <person name="Kuramae E.E."/>
            <person name="Laigret F."/>
            <person name="Lambais M.R."/>
            <person name="Leite L.C.C."/>
            <person name="Lemos E.G.M."/>
            <person name="Lemos M.V.F."/>
            <person name="Lopes S.A."/>
            <person name="Lopes C.R."/>
            <person name="Machado J.A."/>
            <person name="Machado M.A."/>
            <person name="Madeira A.M.B.N."/>
            <person name="Madeira H.M.F."/>
            <person name="Marino C.L."/>
            <person name="Marques M.V."/>
            <person name="Martins E.A.L."/>
            <person name="Martins E.M.F."/>
            <person name="Matsukuma A.Y."/>
            <person name="Menck C.F.M."/>
            <person name="Miracca E.C."/>
            <person name="Miyaki C.Y."/>
            <person name="Monteiro-Vitorello C.B."/>
            <person name="Moon D.H."/>
            <person name="Nagai M.A."/>
            <person name="Nascimento A.L.T.O."/>
            <person name="Netto L.E.S."/>
            <person name="Nhani A. Jr."/>
            <person name="Nobrega F.G."/>
            <person name="Nunes L.R."/>
            <person name="Oliveira M.A."/>
            <person name="de Oliveira M.C."/>
            <person name="de Oliveira R.C."/>
            <person name="Palmieri D.A."/>
            <person name="Paris A."/>
            <person name="Peixoto B.R."/>
            <person name="Pereira G.A.G."/>
            <person name="Pereira H.A. Jr."/>
            <person name="Pesquero J.B."/>
            <person name="Quaggio R.B."/>
            <person name="Roberto P.G."/>
            <person name="Rodrigues V."/>
            <person name="de Rosa A.J.M."/>
            <person name="de Rosa V.E. Jr."/>
            <person name="de Sa R.G."/>
            <person name="Santelli R.V."/>
            <person name="Sawasaki H.E."/>
            <person name="da Silva A.C.R."/>
            <person name="da Silva A.M."/>
            <person name="da Silva F.R."/>
            <person name="Silva W.A. Jr."/>
            <person name="da Silveira J.F."/>
            <person name="Silvestri M.L.Z."/>
            <person name="Siqueira W.J."/>
            <person name="de Souza A.A."/>
            <person name="de Souza A.P."/>
            <person name="Terenzi M.F."/>
            <person name="Truffi D."/>
            <person name="Tsai S.M."/>
            <person name="Tsuhako M.H."/>
            <person name="Vallada H."/>
            <person name="Van Sluys M.A."/>
            <person name="Verjovski-Almeida S."/>
            <person name="Vettore A.L."/>
            <person name="Zago M.A."/>
            <person name="Zatz M."/>
            <person name="Meidanis J."/>
            <person name="Setubal J.C."/>
        </authorList>
    </citation>
    <scope>NUCLEOTIDE SEQUENCE [LARGE SCALE GENOMIC DNA]</scope>
    <source>
        <strain>9a5c</strain>
    </source>
</reference>
<proteinExistence type="inferred from homology"/>
<protein>
    <recommendedName>
        <fullName evidence="1">Phosphatidylglycerol--prolipoprotein diacylglyceryl transferase</fullName>
        <ecNumber evidence="1">2.5.1.145</ecNumber>
    </recommendedName>
</protein>